<name>DTL_DANRE</name>
<comment type="function">
    <text evidence="2">Substrate-specific adapter of a DCX (DDB1-CUL4-X-box) E3 ubiquitin-protein ligase complex required for cell cycle control, DNA damage response and translesion DNA synthesis. The DCX(DTL) complex, also named CRL4(CDT2) complex, mediates the polyubiquitination and subsequent degradation of CDT1, CDKN1A/p21(CIP1), KMT5A and SDE2. CDT1 degradation in response to DNA damage is necessary to ensure proper cell cycle regulation of DNA replication. CDKN1A/p21(CIP1) degradation during S phase or following UV irradiation is essential to control replication licensing. KMT5A degradation is also important for a proper regulation of mechanisms such as TGF-beta signaling, cell cycle progression, DNA repair and cell migration. Most substrates require their interaction with PCNA for their polyubiquitination: substrates interact with PCNA via their PIP-box, and those containing the 'K+4' motif in the PIP box, recruit the DCX(DTL) complex, leading to their degradation. In undamaged proliferating cells, the DCX(DTL) complex also promotes the 'Lys-164' monoubiquitination of PCNA, thereby being involved in PCNA-dependent translesion DNA synthesis (By similarity). May play a role in the regulation of the circadian clock (By similarity).</text>
</comment>
<comment type="pathway">
    <text>Protein modification; protein ubiquitination.</text>
</comment>
<comment type="subunit">
    <text evidence="1">Component of the DCX(DTL) E3 ubiquitin ligase complex, at least composed of cul4 (cul4a or cul4b), ddb1, dtl/cdt2 and rbx1.</text>
</comment>
<comment type="subcellular location">
    <subcellularLocation>
        <location evidence="2">Nucleus</location>
    </subcellularLocation>
    <subcellularLocation>
        <location evidence="1">Cytoplasm</location>
        <location evidence="1">Cytoskeleton</location>
        <location evidence="1">Microtubule organizing center</location>
        <location evidence="1">Centrosome</location>
    </subcellularLocation>
    <subcellularLocation>
        <location evidence="1">Chromosome</location>
    </subcellularLocation>
</comment>
<comment type="disruption phenotype">
    <text evidence="4">General developmental defects, including apoptosis in the central nervous system and a dorsally curved tail, which appear by 28 hpf. Effects are due to general cell cycle defects, including defects in the G2/M checkpoint.</text>
</comment>
<comment type="similarity">
    <text evidence="5">Belongs to the WD repeat cdt2 family.</text>
</comment>
<sequence length="647" mass="70769">MTLFHHVVDRGAKKRGRNGEQRLFPLSSLLDGYECARRDEHISYGASAAAVPPFGCTFSSAHGQQNCLAVANEEGFVTIFNTGEKQSSVLKEWQAHDNAVFDIAWVPGTNCLVTASGDQTARLWDVITGDLLGTFKGHQCSLKSVAFYKQEKAVFSTGGRDGNIMIWDTRCSKKDGFYRQVKQISGAHMKPERFTPQTKKRRGMAPPVDSQQGVTVVLFCDETKLISSGAVDGIIKMWDLRRNYTAYHQNPLPLQAYPYPGSCTRKLGYSGLSLDYTGSRLFSNCTDDNIYMFNISGLKTTPVAVFSGHSNSSFYVKSTVSPDDQFLASGSSDHNVYIWKISDPKQAPMMLQGHSQEVTSVAWCPTDFTKIASCSDDNTVRIWRLNRKPEGENSTIQDGNLVGWTIRKVQSPNRTPGHHSPVELTPSKNPGSVRSVSLASPQPATCAPTGAALPLPSNTSSAPPAKLTSPKMPSSLQQWISRSSKSPVRKALTPVLQGLSFEHRVKRRLETGDSASSGLGEEIDGVSELYPNVKRSRSSVSTLKKEDSFGLESEKRLGSDGAEASGKENSSPRRTDWLSVISQKFKGSAQPKSPSSGSSQQDTRTLESPAAVSPRPMKVFSPPTNKKASPSKPMKKISSYFMKRTQD</sequence>
<organism>
    <name type="scientific">Danio rerio</name>
    <name type="common">Zebrafish</name>
    <name type="synonym">Brachydanio rerio</name>
    <dbReference type="NCBI Taxonomy" id="7955"/>
    <lineage>
        <taxon>Eukaryota</taxon>
        <taxon>Metazoa</taxon>
        <taxon>Chordata</taxon>
        <taxon>Craniata</taxon>
        <taxon>Vertebrata</taxon>
        <taxon>Euteleostomi</taxon>
        <taxon>Actinopterygii</taxon>
        <taxon>Neopterygii</taxon>
        <taxon>Teleostei</taxon>
        <taxon>Ostariophysi</taxon>
        <taxon>Cypriniformes</taxon>
        <taxon>Danionidae</taxon>
        <taxon>Danioninae</taxon>
        <taxon>Danio</taxon>
    </lineage>
</organism>
<protein>
    <recommendedName>
        <fullName>Denticleless protein homolog</fullName>
    </recommendedName>
</protein>
<proteinExistence type="evidence at transcript level"/>
<accession>Q5RHI5</accession>
<accession>Q7ZU24</accession>
<accession>Q8JHI4</accession>
<reference key="1">
    <citation type="journal article" date="2002" name="Nat. Genet.">
        <title>Insertional mutagenesis in zebrafish rapidly identifies genes essential for early vertebrate development.</title>
        <authorList>
            <person name="Golling G."/>
            <person name="Amsterdam A."/>
            <person name="Sun Z."/>
            <person name="Antonelli M."/>
            <person name="Maldonado E."/>
            <person name="Chen W."/>
            <person name="Burgess S."/>
            <person name="Haldi M."/>
            <person name="Artzt K."/>
            <person name="Farrington S."/>
            <person name="Lin S.-Y."/>
            <person name="Nissen R.M."/>
            <person name="Hopkins N."/>
        </authorList>
    </citation>
    <scope>NUCLEOTIDE SEQUENCE [LARGE SCALE MRNA]</scope>
    <source>
        <tissue>Embryo</tissue>
    </source>
</reference>
<reference key="2">
    <citation type="journal article" date="2013" name="Nature">
        <title>The zebrafish reference genome sequence and its relationship to the human genome.</title>
        <authorList>
            <person name="Howe K."/>
            <person name="Clark M.D."/>
            <person name="Torroja C.F."/>
            <person name="Torrance J."/>
            <person name="Berthelot C."/>
            <person name="Muffato M."/>
            <person name="Collins J.E."/>
            <person name="Humphray S."/>
            <person name="McLaren K."/>
            <person name="Matthews L."/>
            <person name="McLaren S."/>
            <person name="Sealy I."/>
            <person name="Caccamo M."/>
            <person name="Churcher C."/>
            <person name="Scott C."/>
            <person name="Barrett J.C."/>
            <person name="Koch R."/>
            <person name="Rauch G.J."/>
            <person name="White S."/>
            <person name="Chow W."/>
            <person name="Kilian B."/>
            <person name="Quintais L.T."/>
            <person name="Guerra-Assuncao J.A."/>
            <person name="Zhou Y."/>
            <person name="Gu Y."/>
            <person name="Yen J."/>
            <person name="Vogel J.H."/>
            <person name="Eyre T."/>
            <person name="Redmond S."/>
            <person name="Banerjee R."/>
            <person name="Chi J."/>
            <person name="Fu B."/>
            <person name="Langley E."/>
            <person name="Maguire S.F."/>
            <person name="Laird G.K."/>
            <person name="Lloyd D."/>
            <person name="Kenyon E."/>
            <person name="Donaldson S."/>
            <person name="Sehra H."/>
            <person name="Almeida-King J."/>
            <person name="Loveland J."/>
            <person name="Trevanion S."/>
            <person name="Jones M."/>
            <person name="Quail M."/>
            <person name="Willey D."/>
            <person name="Hunt A."/>
            <person name="Burton J."/>
            <person name="Sims S."/>
            <person name="McLay K."/>
            <person name="Plumb B."/>
            <person name="Davis J."/>
            <person name="Clee C."/>
            <person name="Oliver K."/>
            <person name="Clark R."/>
            <person name="Riddle C."/>
            <person name="Elliot D."/>
            <person name="Threadgold G."/>
            <person name="Harden G."/>
            <person name="Ware D."/>
            <person name="Begum S."/>
            <person name="Mortimore B."/>
            <person name="Kerry G."/>
            <person name="Heath P."/>
            <person name="Phillimore B."/>
            <person name="Tracey A."/>
            <person name="Corby N."/>
            <person name="Dunn M."/>
            <person name="Johnson C."/>
            <person name="Wood J."/>
            <person name="Clark S."/>
            <person name="Pelan S."/>
            <person name="Griffiths G."/>
            <person name="Smith M."/>
            <person name="Glithero R."/>
            <person name="Howden P."/>
            <person name="Barker N."/>
            <person name="Lloyd C."/>
            <person name="Stevens C."/>
            <person name="Harley J."/>
            <person name="Holt K."/>
            <person name="Panagiotidis G."/>
            <person name="Lovell J."/>
            <person name="Beasley H."/>
            <person name="Henderson C."/>
            <person name="Gordon D."/>
            <person name="Auger K."/>
            <person name="Wright D."/>
            <person name="Collins J."/>
            <person name="Raisen C."/>
            <person name="Dyer L."/>
            <person name="Leung K."/>
            <person name="Robertson L."/>
            <person name="Ambridge K."/>
            <person name="Leongamornlert D."/>
            <person name="McGuire S."/>
            <person name="Gilderthorp R."/>
            <person name="Griffiths C."/>
            <person name="Manthravadi D."/>
            <person name="Nichol S."/>
            <person name="Barker G."/>
            <person name="Whitehead S."/>
            <person name="Kay M."/>
            <person name="Brown J."/>
            <person name="Murnane C."/>
            <person name="Gray E."/>
            <person name="Humphries M."/>
            <person name="Sycamore N."/>
            <person name="Barker D."/>
            <person name="Saunders D."/>
            <person name="Wallis J."/>
            <person name="Babbage A."/>
            <person name="Hammond S."/>
            <person name="Mashreghi-Mohammadi M."/>
            <person name="Barr L."/>
            <person name="Martin S."/>
            <person name="Wray P."/>
            <person name="Ellington A."/>
            <person name="Matthews N."/>
            <person name="Ellwood M."/>
            <person name="Woodmansey R."/>
            <person name="Clark G."/>
            <person name="Cooper J."/>
            <person name="Tromans A."/>
            <person name="Grafham D."/>
            <person name="Skuce C."/>
            <person name="Pandian R."/>
            <person name="Andrews R."/>
            <person name="Harrison E."/>
            <person name="Kimberley A."/>
            <person name="Garnett J."/>
            <person name="Fosker N."/>
            <person name="Hall R."/>
            <person name="Garner P."/>
            <person name="Kelly D."/>
            <person name="Bird C."/>
            <person name="Palmer S."/>
            <person name="Gehring I."/>
            <person name="Berger A."/>
            <person name="Dooley C.M."/>
            <person name="Ersan-Urun Z."/>
            <person name="Eser C."/>
            <person name="Geiger H."/>
            <person name="Geisler M."/>
            <person name="Karotki L."/>
            <person name="Kirn A."/>
            <person name="Konantz J."/>
            <person name="Konantz M."/>
            <person name="Oberlander M."/>
            <person name="Rudolph-Geiger S."/>
            <person name="Teucke M."/>
            <person name="Lanz C."/>
            <person name="Raddatz G."/>
            <person name="Osoegawa K."/>
            <person name="Zhu B."/>
            <person name="Rapp A."/>
            <person name="Widaa S."/>
            <person name="Langford C."/>
            <person name="Yang F."/>
            <person name="Schuster S.C."/>
            <person name="Carter N.P."/>
            <person name="Harrow J."/>
            <person name="Ning Z."/>
            <person name="Herrero J."/>
            <person name="Searle S.M."/>
            <person name="Enright A."/>
            <person name="Geisler R."/>
            <person name="Plasterk R.H."/>
            <person name="Lee C."/>
            <person name="Westerfield M."/>
            <person name="de Jong P.J."/>
            <person name="Zon L.I."/>
            <person name="Postlethwait J.H."/>
            <person name="Nusslein-Volhard C."/>
            <person name="Hubbard T.J."/>
            <person name="Roest Crollius H."/>
            <person name="Rogers J."/>
            <person name="Stemple D.L."/>
        </authorList>
    </citation>
    <scope>NUCLEOTIDE SEQUENCE [LARGE SCALE GENOMIC DNA]</scope>
    <source>
        <strain>Tuebingen</strain>
    </source>
</reference>
<reference key="3">
    <citation type="submission" date="2003-01" db="EMBL/GenBank/DDBJ databases">
        <authorList>
            <consortium name="NIH - Zebrafish Gene Collection (ZGC) project"/>
        </authorList>
    </citation>
    <scope>NUCLEOTIDE SEQUENCE [LARGE SCALE MRNA]</scope>
    <source>
        <strain>AB</strain>
    </source>
</reference>
<reference key="4">
    <citation type="journal article" date="2006" name="Genes Dev.">
        <title>DTL/CDT2 is essential for both CDT1 regulation and the early G2/M checkpoint.</title>
        <authorList>
            <person name="Sansam C.L."/>
            <person name="Shepard J.L."/>
            <person name="Lai K."/>
            <person name="Ianari A."/>
            <person name="Danielian P.S."/>
            <person name="Amsterdam A."/>
            <person name="Hopkins N."/>
            <person name="Lees J.A."/>
        </authorList>
    </citation>
    <scope>DISRUPTION PHENOTYPE</scope>
</reference>
<feature type="chain" id="PRO_0000396624" description="Denticleless protein homolog">
    <location>
        <begin position="1"/>
        <end position="647"/>
    </location>
</feature>
<feature type="repeat" description="WD 1">
    <location>
        <begin position="48"/>
        <end position="88"/>
    </location>
</feature>
<feature type="repeat" description="WD 2">
    <location>
        <begin position="95"/>
        <end position="134"/>
    </location>
</feature>
<feature type="repeat" description="WD 3">
    <location>
        <begin position="137"/>
        <end position="177"/>
    </location>
</feature>
<feature type="repeat" description="WD 4">
    <location>
        <begin position="209"/>
        <end position="248"/>
    </location>
</feature>
<feature type="repeat" description="WD 5">
    <location>
        <begin position="264"/>
        <end position="303"/>
    </location>
</feature>
<feature type="repeat" description="WD 6">
    <location>
        <begin position="308"/>
        <end position="349"/>
    </location>
</feature>
<feature type="repeat" description="WD 7">
    <location>
        <begin position="353"/>
        <end position="393"/>
    </location>
</feature>
<feature type="region of interest" description="Disordered" evidence="3">
    <location>
        <begin position="410"/>
        <end position="487"/>
    </location>
</feature>
<feature type="region of interest" description="Disordered" evidence="3">
    <location>
        <begin position="534"/>
        <end position="647"/>
    </location>
</feature>
<feature type="short sequence motif" description="DDB1-binding motif" evidence="1">
    <location>
        <begin position="167"/>
        <end position="170"/>
    </location>
</feature>
<feature type="short sequence motif" description="DDB1-binding motif" evidence="1">
    <location>
        <begin position="238"/>
        <end position="241"/>
    </location>
</feature>
<feature type="compositionally biased region" description="Polar residues" evidence="3">
    <location>
        <begin position="426"/>
        <end position="443"/>
    </location>
</feature>
<feature type="compositionally biased region" description="Polar residues" evidence="3">
    <location>
        <begin position="471"/>
        <end position="486"/>
    </location>
</feature>
<feature type="compositionally biased region" description="Basic and acidic residues" evidence="3">
    <location>
        <begin position="543"/>
        <end position="558"/>
    </location>
</feature>
<feature type="compositionally biased region" description="Low complexity" evidence="3">
    <location>
        <begin position="586"/>
        <end position="600"/>
    </location>
</feature>
<feature type="sequence conflict" description="In Ref. 1; AAM34656." evidence="5" ref="1">
    <original>G</original>
    <variation>C</variation>
    <location>
        <position position="32"/>
    </location>
</feature>
<feature type="sequence conflict" description="In Ref. 3; AAH45316." evidence="5" ref="3">
    <original>K</original>
    <variation>E</variation>
    <location>
        <position position="136"/>
    </location>
</feature>
<feature type="sequence conflict" description="In Ref. 3; AAH45316." evidence="5" ref="3">
    <original>A</original>
    <variation>V</variation>
    <location>
        <position position="230"/>
    </location>
</feature>
<feature type="sequence conflict" description="In Ref. 1; AAM34656." evidence="5" ref="1">
    <original>V</original>
    <variation>I</variation>
    <location>
        <position position="303"/>
    </location>
</feature>
<feature type="sequence conflict" description="In Ref. 1; AAM34656." evidence="5" ref="1">
    <original>N</original>
    <variation>S</variation>
    <location>
        <position position="311"/>
    </location>
</feature>
<feature type="sequence conflict" description="In Ref. 1; AAM34656." evidence="5" ref="1">
    <original>K</original>
    <variation>R</variation>
    <location>
        <position position="340"/>
    </location>
</feature>
<feature type="sequence conflict" description="In Ref. 1; AAM34656." evidence="5" ref="1">
    <original>H</original>
    <variation>R</variation>
    <location>
        <position position="503"/>
    </location>
</feature>
<feature type="sequence conflict" description="In Ref. 1; AAM34656." evidence="5" ref="1">
    <original>L</original>
    <variation>Q</variation>
    <location>
        <position position="557"/>
    </location>
</feature>
<evidence type="ECO:0000250" key="1"/>
<evidence type="ECO:0000250" key="2">
    <source>
        <dbReference type="UniProtKB" id="Q9NZJ0"/>
    </source>
</evidence>
<evidence type="ECO:0000256" key="3">
    <source>
        <dbReference type="SAM" id="MobiDB-lite"/>
    </source>
</evidence>
<evidence type="ECO:0000269" key="4">
    <source>
    </source>
</evidence>
<evidence type="ECO:0000305" key="5"/>
<gene>
    <name type="primary">dtl</name>
    <name type="synonym">cdt2</name>
    <name type="ORF">si:dkey-18c8.4</name>
</gene>
<dbReference type="EMBL" id="AF506212">
    <property type="protein sequence ID" value="AAM34656.1"/>
    <property type="molecule type" value="mRNA"/>
</dbReference>
<dbReference type="EMBL" id="BX511163">
    <property type="protein sequence ID" value="CAI20732.1"/>
    <property type="molecule type" value="Genomic_DNA"/>
</dbReference>
<dbReference type="EMBL" id="BX510324">
    <property type="protein sequence ID" value="CAI20732.1"/>
    <property type="status" value="JOINED"/>
    <property type="molecule type" value="Genomic_DNA"/>
</dbReference>
<dbReference type="EMBL" id="BX510324">
    <property type="protein sequence ID" value="CAI20792.1"/>
    <property type="molecule type" value="Genomic_DNA"/>
</dbReference>
<dbReference type="EMBL" id="BX511163">
    <property type="protein sequence ID" value="CAI20792.1"/>
    <property type="status" value="JOINED"/>
    <property type="molecule type" value="Genomic_DNA"/>
</dbReference>
<dbReference type="EMBL" id="BC045316">
    <property type="protein sequence ID" value="AAH45316.1"/>
    <property type="molecule type" value="mRNA"/>
</dbReference>
<dbReference type="RefSeq" id="NP_775348.1">
    <property type="nucleotide sequence ID" value="NM_173241.1"/>
</dbReference>
<dbReference type="SMR" id="Q5RHI5"/>
<dbReference type="FunCoup" id="Q5RHI5">
    <property type="interactions" value="1521"/>
</dbReference>
<dbReference type="STRING" id="7955.ENSDARP00000033992"/>
<dbReference type="PaxDb" id="7955-ENSDARP00000033992"/>
<dbReference type="Ensembl" id="ENSDART00000034098">
    <property type="protein sequence ID" value="ENSDARP00000033992"/>
    <property type="gene ID" value="ENSDARG00000023002"/>
</dbReference>
<dbReference type="GeneID" id="192314"/>
<dbReference type="KEGG" id="dre:192314"/>
<dbReference type="AGR" id="ZFIN:ZDB-GENE-020419-34"/>
<dbReference type="CTD" id="51514"/>
<dbReference type="ZFIN" id="ZDB-GENE-020419-34">
    <property type="gene designation" value="dtl"/>
</dbReference>
<dbReference type="eggNOG" id="KOG0321">
    <property type="taxonomic scope" value="Eukaryota"/>
</dbReference>
<dbReference type="HOGENOM" id="CLU_023407_0_0_1"/>
<dbReference type="InParanoid" id="Q5RHI5"/>
<dbReference type="OMA" id="KEWLAHD"/>
<dbReference type="OrthoDB" id="2096344at2759"/>
<dbReference type="PhylomeDB" id="Q5RHI5"/>
<dbReference type="TreeFam" id="TF324483"/>
<dbReference type="Reactome" id="R-DRE-8951664">
    <property type="pathway name" value="Neddylation"/>
</dbReference>
<dbReference type="UniPathway" id="UPA00143"/>
<dbReference type="PRO" id="PR:Q5RHI5"/>
<dbReference type="Proteomes" id="UP000000437">
    <property type="component" value="Chromosome 20"/>
</dbReference>
<dbReference type="Bgee" id="ENSDARG00000023002">
    <property type="expression patterns" value="Expressed in cleaving embryo and 43 other cell types or tissues"/>
</dbReference>
<dbReference type="GO" id="GO:0005813">
    <property type="term" value="C:centrosome"/>
    <property type="evidence" value="ECO:0000250"/>
    <property type="project" value="UniProtKB"/>
</dbReference>
<dbReference type="GO" id="GO:0005694">
    <property type="term" value="C:chromosome"/>
    <property type="evidence" value="ECO:0007669"/>
    <property type="project" value="UniProtKB-SubCell"/>
</dbReference>
<dbReference type="GO" id="GO:0031464">
    <property type="term" value="C:Cul4A-RING E3 ubiquitin ligase complex"/>
    <property type="evidence" value="ECO:0000250"/>
    <property type="project" value="UniProtKB"/>
</dbReference>
<dbReference type="GO" id="GO:0031465">
    <property type="term" value="C:Cul4B-RING E3 ubiquitin ligase complex"/>
    <property type="evidence" value="ECO:0000250"/>
    <property type="project" value="UniProtKB"/>
</dbReference>
<dbReference type="GO" id="GO:0005737">
    <property type="term" value="C:cytoplasm"/>
    <property type="evidence" value="ECO:0007669"/>
    <property type="project" value="UniProtKB-KW"/>
</dbReference>
<dbReference type="GO" id="GO:0005634">
    <property type="term" value="C:nucleus"/>
    <property type="evidence" value="ECO:0000250"/>
    <property type="project" value="UniProtKB"/>
</dbReference>
<dbReference type="GO" id="GO:0030674">
    <property type="term" value="F:protein-macromolecule adaptor activity"/>
    <property type="evidence" value="ECO:0000318"/>
    <property type="project" value="GO_Central"/>
</dbReference>
<dbReference type="GO" id="GO:0006974">
    <property type="term" value="P:DNA damage response"/>
    <property type="evidence" value="ECO:0000250"/>
    <property type="project" value="UniProtKB"/>
</dbReference>
<dbReference type="GO" id="GO:0006260">
    <property type="term" value="P:DNA replication"/>
    <property type="evidence" value="ECO:0007669"/>
    <property type="project" value="UniProtKB-KW"/>
</dbReference>
<dbReference type="GO" id="GO:0007095">
    <property type="term" value="P:mitotic G2 DNA damage checkpoint signaling"/>
    <property type="evidence" value="ECO:0000315"/>
    <property type="project" value="UniProtKB"/>
</dbReference>
<dbReference type="GO" id="GO:0043161">
    <property type="term" value="P:proteasome-mediated ubiquitin-dependent protein catabolic process"/>
    <property type="evidence" value="ECO:0000318"/>
    <property type="project" value="GO_Central"/>
</dbReference>
<dbReference type="GO" id="GO:0006513">
    <property type="term" value="P:protein monoubiquitination"/>
    <property type="evidence" value="ECO:0000250"/>
    <property type="project" value="UniProtKB"/>
</dbReference>
<dbReference type="GO" id="GO:0000209">
    <property type="term" value="P:protein polyubiquitination"/>
    <property type="evidence" value="ECO:0000250"/>
    <property type="project" value="UniProtKB"/>
</dbReference>
<dbReference type="GO" id="GO:0051726">
    <property type="term" value="P:regulation of cell cycle"/>
    <property type="evidence" value="ECO:0000250"/>
    <property type="project" value="UniProtKB"/>
</dbReference>
<dbReference type="GO" id="GO:0009411">
    <property type="term" value="P:response to UV"/>
    <property type="evidence" value="ECO:0000250"/>
    <property type="project" value="UniProtKB"/>
</dbReference>
<dbReference type="GO" id="GO:0048511">
    <property type="term" value="P:rhythmic process"/>
    <property type="evidence" value="ECO:0007669"/>
    <property type="project" value="UniProtKB-KW"/>
</dbReference>
<dbReference type="GO" id="GO:0019985">
    <property type="term" value="P:translesion synthesis"/>
    <property type="evidence" value="ECO:0000250"/>
    <property type="project" value="UniProtKB"/>
</dbReference>
<dbReference type="GO" id="GO:0006511">
    <property type="term" value="P:ubiquitin-dependent protein catabolic process"/>
    <property type="evidence" value="ECO:0000250"/>
    <property type="project" value="UniProtKB"/>
</dbReference>
<dbReference type="CDD" id="cd00200">
    <property type="entry name" value="WD40"/>
    <property type="match status" value="1"/>
</dbReference>
<dbReference type="FunFam" id="2.130.10.10:FF:002879">
    <property type="entry name" value="Denticleless protein homolog"/>
    <property type="match status" value="1"/>
</dbReference>
<dbReference type="Gene3D" id="2.130.10.10">
    <property type="entry name" value="YVTN repeat-like/Quinoprotein amine dehydrogenase"/>
    <property type="match status" value="2"/>
</dbReference>
<dbReference type="InterPro" id="IPR020472">
    <property type="entry name" value="G-protein_beta_WD-40_rep"/>
</dbReference>
<dbReference type="InterPro" id="IPR051865">
    <property type="entry name" value="WD-repeat_CDT2_adapter"/>
</dbReference>
<dbReference type="InterPro" id="IPR015943">
    <property type="entry name" value="WD40/YVTN_repeat-like_dom_sf"/>
</dbReference>
<dbReference type="InterPro" id="IPR019775">
    <property type="entry name" value="WD40_repeat_CS"/>
</dbReference>
<dbReference type="InterPro" id="IPR036322">
    <property type="entry name" value="WD40_repeat_dom_sf"/>
</dbReference>
<dbReference type="InterPro" id="IPR001680">
    <property type="entry name" value="WD40_rpt"/>
</dbReference>
<dbReference type="PANTHER" id="PTHR22852:SF0">
    <property type="entry name" value="DENTICLELESS PROTEIN HOMOLOG"/>
    <property type="match status" value="1"/>
</dbReference>
<dbReference type="PANTHER" id="PTHR22852">
    <property type="entry name" value="LETHAL 2 DENTICLELESS PROTEIN RETINOIC ACID-REGULATED NUCLEAR MATRIX-ASSOCIATED PROTEIN"/>
    <property type="match status" value="1"/>
</dbReference>
<dbReference type="Pfam" id="PF00400">
    <property type="entry name" value="WD40"/>
    <property type="match status" value="5"/>
</dbReference>
<dbReference type="PRINTS" id="PR00320">
    <property type="entry name" value="GPROTEINBRPT"/>
</dbReference>
<dbReference type="SMART" id="SM00320">
    <property type="entry name" value="WD40"/>
    <property type="match status" value="6"/>
</dbReference>
<dbReference type="SUPFAM" id="SSF50978">
    <property type="entry name" value="WD40 repeat-like"/>
    <property type="match status" value="1"/>
</dbReference>
<dbReference type="PROSITE" id="PS00678">
    <property type="entry name" value="WD_REPEATS_1"/>
    <property type="match status" value="2"/>
</dbReference>
<dbReference type="PROSITE" id="PS50082">
    <property type="entry name" value="WD_REPEATS_2"/>
    <property type="match status" value="5"/>
</dbReference>
<dbReference type="PROSITE" id="PS50294">
    <property type="entry name" value="WD_REPEATS_REGION"/>
    <property type="match status" value="1"/>
</dbReference>
<keyword id="KW-0090">Biological rhythms</keyword>
<keyword id="KW-0158">Chromosome</keyword>
<keyword id="KW-0963">Cytoplasm</keyword>
<keyword id="KW-0206">Cytoskeleton</keyword>
<keyword id="KW-0227">DNA damage</keyword>
<keyword id="KW-0235">DNA replication</keyword>
<keyword id="KW-0539">Nucleus</keyword>
<keyword id="KW-1185">Reference proteome</keyword>
<keyword id="KW-0677">Repeat</keyword>
<keyword id="KW-0833">Ubl conjugation pathway</keyword>
<keyword id="KW-0853">WD repeat</keyword>